<gene>
    <name evidence="1" type="primary">rpoY</name>
    <name type="ordered locus">SPT_0170</name>
</gene>
<proteinExistence type="inferred from homology"/>
<protein>
    <recommendedName>
        <fullName evidence="1">DNA-directed RNA polymerase subunit epsilon</fullName>
        <shortName evidence="1">RNAP epsilon subunit</shortName>
        <ecNumber evidence="1">2.7.7.6</ecNumber>
    </recommendedName>
    <alternativeName>
        <fullName evidence="1">RNA polymerase epsilon subunit</fullName>
    </alternativeName>
    <alternativeName>
        <fullName evidence="1">Transcriptase subunit epsilon</fullName>
    </alternativeName>
</protein>
<evidence type="ECO:0000255" key="1">
    <source>
        <dbReference type="HAMAP-Rule" id="MF_01553"/>
    </source>
</evidence>
<sequence length="77" mass="9288">MIYKVFYQETKERSPRRETTRTLYLDIDASSELEGRITARQLVEENRPEYNIEYIELLSDKLLDYEKETGAFEITEF</sequence>
<organism>
    <name type="scientific">Streptococcus pneumoniae (strain Taiwan19F-14)</name>
    <dbReference type="NCBI Taxonomy" id="487213"/>
    <lineage>
        <taxon>Bacteria</taxon>
        <taxon>Bacillati</taxon>
        <taxon>Bacillota</taxon>
        <taxon>Bacilli</taxon>
        <taxon>Lactobacillales</taxon>
        <taxon>Streptococcaceae</taxon>
        <taxon>Streptococcus</taxon>
    </lineage>
</organism>
<comment type="function">
    <text evidence="1">A non-essential component of RNA polymerase (RNAP).</text>
</comment>
<comment type="catalytic activity">
    <reaction evidence="1">
        <text>RNA(n) + a ribonucleoside 5'-triphosphate = RNA(n+1) + diphosphate</text>
        <dbReference type="Rhea" id="RHEA:21248"/>
        <dbReference type="Rhea" id="RHEA-COMP:14527"/>
        <dbReference type="Rhea" id="RHEA-COMP:17342"/>
        <dbReference type="ChEBI" id="CHEBI:33019"/>
        <dbReference type="ChEBI" id="CHEBI:61557"/>
        <dbReference type="ChEBI" id="CHEBI:140395"/>
        <dbReference type="EC" id="2.7.7.6"/>
    </reaction>
</comment>
<comment type="subunit">
    <text evidence="1">RNAP is composed of a core of 2 alpha, a beta and a beta' subunit. The core is associated with a delta subunit, and at least one of epsilon or omega. When a sigma factor is associated with the core the holoenzyme is formed, which can initiate transcription.</text>
</comment>
<comment type="similarity">
    <text evidence="1">Belongs to the RNA polymerase subunit epsilon family.</text>
</comment>
<name>RPOY_STRZT</name>
<dbReference type="EC" id="2.7.7.6" evidence="1"/>
<dbReference type="EMBL" id="CP000921">
    <property type="protein sequence ID" value="ACO24100.1"/>
    <property type="molecule type" value="Genomic_DNA"/>
</dbReference>
<dbReference type="RefSeq" id="WP_000639589.1">
    <property type="nucleotide sequence ID" value="NC_012469.1"/>
</dbReference>
<dbReference type="SMR" id="C1CP08"/>
<dbReference type="KEGG" id="snt:SPT_0170"/>
<dbReference type="HOGENOM" id="CLU_187518_0_0_9"/>
<dbReference type="GO" id="GO:0000428">
    <property type="term" value="C:DNA-directed RNA polymerase complex"/>
    <property type="evidence" value="ECO:0007669"/>
    <property type="project" value="UniProtKB-KW"/>
</dbReference>
<dbReference type="GO" id="GO:0003677">
    <property type="term" value="F:DNA binding"/>
    <property type="evidence" value="ECO:0007669"/>
    <property type="project" value="UniProtKB-UniRule"/>
</dbReference>
<dbReference type="GO" id="GO:0003899">
    <property type="term" value="F:DNA-directed RNA polymerase activity"/>
    <property type="evidence" value="ECO:0007669"/>
    <property type="project" value="UniProtKB-UniRule"/>
</dbReference>
<dbReference type="GO" id="GO:0006351">
    <property type="term" value="P:DNA-templated transcription"/>
    <property type="evidence" value="ECO:0007669"/>
    <property type="project" value="UniProtKB-UniRule"/>
</dbReference>
<dbReference type="Gene3D" id="3.10.20.730">
    <property type="entry name" value="RNAP, epsilon subunit-like"/>
    <property type="match status" value="1"/>
</dbReference>
<dbReference type="HAMAP" id="MF_01553">
    <property type="entry name" value="RNApol_bact_RpoY"/>
    <property type="match status" value="1"/>
</dbReference>
<dbReference type="InterPro" id="IPR009907">
    <property type="entry name" value="RpoY"/>
</dbReference>
<dbReference type="NCBIfam" id="NF010188">
    <property type="entry name" value="PRK13667.1"/>
    <property type="match status" value="1"/>
</dbReference>
<dbReference type="Pfam" id="PF07288">
    <property type="entry name" value="RpoY"/>
    <property type="match status" value="1"/>
</dbReference>
<accession>C1CP08</accession>
<keyword id="KW-0240">DNA-directed RNA polymerase</keyword>
<keyword id="KW-0548">Nucleotidyltransferase</keyword>
<keyword id="KW-0804">Transcription</keyword>
<keyword id="KW-0808">Transferase</keyword>
<reference key="1">
    <citation type="journal article" date="2010" name="Genome Biol.">
        <title>Structure and dynamics of the pan-genome of Streptococcus pneumoniae and closely related species.</title>
        <authorList>
            <person name="Donati C."/>
            <person name="Hiller N.L."/>
            <person name="Tettelin H."/>
            <person name="Muzzi A."/>
            <person name="Croucher N.J."/>
            <person name="Angiuoli S.V."/>
            <person name="Oggioni M."/>
            <person name="Dunning Hotopp J.C."/>
            <person name="Hu F.Z."/>
            <person name="Riley D.R."/>
            <person name="Covacci A."/>
            <person name="Mitchell T.J."/>
            <person name="Bentley S.D."/>
            <person name="Kilian M."/>
            <person name="Ehrlich G.D."/>
            <person name="Rappuoli R."/>
            <person name="Moxon E.R."/>
            <person name="Masignani V."/>
        </authorList>
    </citation>
    <scope>NUCLEOTIDE SEQUENCE [LARGE SCALE GENOMIC DNA]</scope>
    <source>
        <strain>Taiwan19F-14</strain>
    </source>
</reference>
<feature type="chain" id="PRO_1000185342" description="DNA-directed RNA polymerase subunit epsilon">
    <location>
        <begin position="1"/>
        <end position="77"/>
    </location>
</feature>